<organism>
    <name type="scientific">Streptococcus pneumoniae (strain P1031)</name>
    <dbReference type="NCBI Taxonomy" id="488223"/>
    <lineage>
        <taxon>Bacteria</taxon>
        <taxon>Bacillati</taxon>
        <taxon>Bacillota</taxon>
        <taxon>Bacilli</taxon>
        <taxon>Lactobacillales</taxon>
        <taxon>Streptococcaceae</taxon>
        <taxon>Streptococcus</taxon>
    </lineage>
</organism>
<accession>C1CMU0</accession>
<name>RL34_STRZP</name>
<dbReference type="EMBL" id="CP000920">
    <property type="protein sequence ID" value="ACO21190.1"/>
    <property type="molecule type" value="Genomic_DNA"/>
</dbReference>
<dbReference type="RefSeq" id="WP_000831905.1">
    <property type="nucleotide sequence ID" value="NC_012467.1"/>
</dbReference>
<dbReference type="SMR" id="C1CMU0"/>
<dbReference type="GeneID" id="93738550"/>
<dbReference type="KEGG" id="spp:SPP_2016"/>
<dbReference type="HOGENOM" id="CLU_129938_2_0_9"/>
<dbReference type="GO" id="GO:1990904">
    <property type="term" value="C:ribonucleoprotein complex"/>
    <property type="evidence" value="ECO:0007669"/>
    <property type="project" value="UniProtKB-KW"/>
</dbReference>
<dbReference type="GO" id="GO:0005840">
    <property type="term" value="C:ribosome"/>
    <property type="evidence" value="ECO:0007669"/>
    <property type="project" value="UniProtKB-KW"/>
</dbReference>
<dbReference type="GO" id="GO:0003735">
    <property type="term" value="F:structural constituent of ribosome"/>
    <property type="evidence" value="ECO:0007669"/>
    <property type="project" value="InterPro"/>
</dbReference>
<dbReference type="GO" id="GO:0006412">
    <property type="term" value="P:translation"/>
    <property type="evidence" value="ECO:0007669"/>
    <property type="project" value="UniProtKB-UniRule"/>
</dbReference>
<dbReference type="FunFam" id="1.10.287.3980:FF:000001">
    <property type="entry name" value="Mitochondrial ribosomal protein L34"/>
    <property type="match status" value="1"/>
</dbReference>
<dbReference type="Gene3D" id="1.10.287.3980">
    <property type="match status" value="1"/>
</dbReference>
<dbReference type="HAMAP" id="MF_00391">
    <property type="entry name" value="Ribosomal_bL34"/>
    <property type="match status" value="1"/>
</dbReference>
<dbReference type="InterPro" id="IPR000271">
    <property type="entry name" value="Ribosomal_bL34"/>
</dbReference>
<dbReference type="InterPro" id="IPR020939">
    <property type="entry name" value="Ribosomal_bL34_CS"/>
</dbReference>
<dbReference type="NCBIfam" id="TIGR01030">
    <property type="entry name" value="rpmH_bact"/>
    <property type="match status" value="1"/>
</dbReference>
<dbReference type="PANTHER" id="PTHR14503:SF4">
    <property type="entry name" value="LARGE RIBOSOMAL SUBUNIT PROTEIN BL34M"/>
    <property type="match status" value="1"/>
</dbReference>
<dbReference type="PANTHER" id="PTHR14503">
    <property type="entry name" value="MITOCHONDRIAL RIBOSOMAL PROTEIN 34 FAMILY MEMBER"/>
    <property type="match status" value="1"/>
</dbReference>
<dbReference type="Pfam" id="PF00468">
    <property type="entry name" value="Ribosomal_L34"/>
    <property type="match status" value="1"/>
</dbReference>
<dbReference type="PROSITE" id="PS00784">
    <property type="entry name" value="RIBOSOMAL_L34"/>
    <property type="match status" value="1"/>
</dbReference>
<feature type="chain" id="PRO_1000196122" description="Large ribosomal subunit protein bL34">
    <location>
        <begin position="1"/>
        <end position="44"/>
    </location>
</feature>
<feature type="region of interest" description="Disordered" evidence="2">
    <location>
        <begin position="1"/>
        <end position="44"/>
    </location>
</feature>
<feature type="compositionally biased region" description="Basic residues" evidence="2">
    <location>
        <begin position="1"/>
        <end position="19"/>
    </location>
</feature>
<feature type="compositionally biased region" description="Basic residues" evidence="2">
    <location>
        <begin position="26"/>
        <end position="44"/>
    </location>
</feature>
<sequence>MKRTYQPSKLRRARKHGFRNRMSTKNGRRVLAARRRKGRKVLAA</sequence>
<comment type="similarity">
    <text evidence="1">Belongs to the bacterial ribosomal protein bL34 family.</text>
</comment>
<proteinExistence type="inferred from homology"/>
<protein>
    <recommendedName>
        <fullName evidence="1">Large ribosomal subunit protein bL34</fullName>
    </recommendedName>
    <alternativeName>
        <fullName evidence="3">50S ribosomal protein L34</fullName>
    </alternativeName>
</protein>
<evidence type="ECO:0000255" key="1">
    <source>
        <dbReference type="HAMAP-Rule" id="MF_00391"/>
    </source>
</evidence>
<evidence type="ECO:0000256" key="2">
    <source>
        <dbReference type="SAM" id="MobiDB-lite"/>
    </source>
</evidence>
<evidence type="ECO:0000305" key="3"/>
<keyword id="KW-0687">Ribonucleoprotein</keyword>
<keyword id="KW-0689">Ribosomal protein</keyword>
<gene>
    <name evidence="1" type="primary">rpmH</name>
    <name type="ordered locus">SPP_2016</name>
</gene>
<reference key="1">
    <citation type="journal article" date="2010" name="Genome Biol.">
        <title>Structure and dynamics of the pan-genome of Streptococcus pneumoniae and closely related species.</title>
        <authorList>
            <person name="Donati C."/>
            <person name="Hiller N.L."/>
            <person name="Tettelin H."/>
            <person name="Muzzi A."/>
            <person name="Croucher N.J."/>
            <person name="Angiuoli S.V."/>
            <person name="Oggioni M."/>
            <person name="Dunning Hotopp J.C."/>
            <person name="Hu F.Z."/>
            <person name="Riley D.R."/>
            <person name="Covacci A."/>
            <person name="Mitchell T.J."/>
            <person name="Bentley S.D."/>
            <person name="Kilian M."/>
            <person name="Ehrlich G.D."/>
            <person name="Rappuoli R."/>
            <person name="Moxon E.R."/>
            <person name="Masignani V."/>
        </authorList>
    </citation>
    <scope>NUCLEOTIDE SEQUENCE [LARGE SCALE GENOMIC DNA]</scope>
    <source>
        <strain>P1031</strain>
    </source>
</reference>